<gene>
    <name type="primary">Rasal3</name>
</gene>
<keyword id="KW-0025">Alternative splicing</keyword>
<keyword id="KW-0175">Coiled coil</keyword>
<keyword id="KW-0963">Cytoplasm</keyword>
<keyword id="KW-0343">GTPase activation</keyword>
<keyword id="KW-0597">Phosphoprotein</keyword>
<keyword id="KW-1185">Reference proteome</keyword>
<evidence type="ECO:0000250" key="1">
    <source>
        <dbReference type="UniProtKB" id="Q86YV0"/>
    </source>
</evidence>
<evidence type="ECO:0000255" key="2"/>
<evidence type="ECO:0000255" key="3">
    <source>
        <dbReference type="PROSITE-ProRule" id="PRU00041"/>
    </source>
</evidence>
<evidence type="ECO:0000255" key="4">
    <source>
        <dbReference type="PROSITE-ProRule" id="PRU00167"/>
    </source>
</evidence>
<evidence type="ECO:0000256" key="5">
    <source>
        <dbReference type="SAM" id="MobiDB-lite"/>
    </source>
</evidence>
<evidence type="ECO:0000269" key="6">
    <source>
    </source>
</evidence>
<evidence type="ECO:0000303" key="7">
    <source>
    </source>
</evidence>
<evidence type="ECO:0000305" key="8"/>
<evidence type="ECO:0007744" key="9">
    <source>
    </source>
</evidence>
<accession>Q8C2K5</accession>
<accession>A3KMM0</accession>
<accession>Q8C2A5</accession>
<accession>Q8C9R4</accession>
<accession>Q8CDB4</accession>
<name>RASL3_MOUSE</name>
<proteinExistence type="evidence at protein level"/>
<dbReference type="EMBL" id="AK030797">
    <property type="protein sequence ID" value="BAC27141.1"/>
    <property type="molecule type" value="mRNA"/>
</dbReference>
<dbReference type="EMBL" id="AK041479">
    <property type="protein sequence ID" value="BAC30956.1"/>
    <property type="status" value="ALT_FRAME"/>
    <property type="molecule type" value="mRNA"/>
</dbReference>
<dbReference type="EMBL" id="AK088449">
    <property type="protein sequence ID" value="BAC40358.1"/>
    <property type="molecule type" value="mRNA"/>
</dbReference>
<dbReference type="EMBL" id="AK088987">
    <property type="protein sequence ID" value="BAC40689.1"/>
    <property type="molecule type" value="mRNA"/>
</dbReference>
<dbReference type="EMBL" id="BC132341">
    <property type="protein sequence ID" value="AAI32342.2"/>
    <property type="molecule type" value="mRNA"/>
</dbReference>
<dbReference type="CCDS" id="CCDS37556.1">
    <molecule id="Q8C2K5-1"/>
</dbReference>
<dbReference type="CCDS" id="CCDS84292.1">
    <molecule id="Q8C2K5-2"/>
</dbReference>
<dbReference type="RefSeq" id="NP_001334272.1">
    <molecule id="Q8C2K5-2"/>
    <property type="nucleotide sequence ID" value="NM_001347343.2"/>
</dbReference>
<dbReference type="RefSeq" id="NP_848900.2">
    <molecule id="Q8C2K5-1"/>
    <property type="nucleotide sequence ID" value="NM_178785.3"/>
</dbReference>
<dbReference type="SMR" id="Q8C2K5"/>
<dbReference type="BioGRID" id="236057">
    <property type="interactions" value="2"/>
</dbReference>
<dbReference type="DIP" id="DIP-61657N"/>
<dbReference type="FunCoup" id="Q8C2K5">
    <property type="interactions" value="470"/>
</dbReference>
<dbReference type="IntAct" id="Q8C2K5">
    <property type="interactions" value="4"/>
</dbReference>
<dbReference type="MINT" id="Q8C2K5"/>
<dbReference type="STRING" id="10090.ENSMUSP00000123141"/>
<dbReference type="GlyGen" id="Q8C2K5">
    <property type="glycosylation" value="1 site"/>
</dbReference>
<dbReference type="iPTMnet" id="Q8C2K5"/>
<dbReference type="PhosphoSitePlus" id="Q8C2K5"/>
<dbReference type="jPOST" id="Q8C2K5"/>
<dbReference type="PaxDb" id="10090-ENSMUSP00000064084"/>
<dbReference type="ProteomicsDB" id="300240">
    <molecule id="Q8C2K5-1"/>
</dbReference>
<dbReference type="ProteomicsDB" id="300241">
    <molecule id="Q8C2K5-2"/>
</dbReference>
<dbReference type="Antibodypedia" id="54246">
    <property type="antibodies" value="65 antibodies from 15 providers"/>
</dbReference>
<dbReference type="DNASU" id="320484"/>
<dbReference type="Ensembl" id="ENSMUST00000063824.14">
    <molecule id="Q8C2K5-1"/>
    <property type="protein sequence ID" value="ENSMUSP00000064084.8"/>
    <property type="gene ID" value="ENSMUSG00000052142.16"/>
</dbReference>
<dbReference type="Ensembl" id="ENSMUST00000137458.2">
    <molecule id="Q8C2K5-2"/>
    <property type="protein sequence ID" value="ENSMUSP00000123141.2"/>
    <property type="gene ID" value="ENSMUSG00000052142.16"/>
</dbReference>
<dbReference type="GeneID" id="320484"/>
<dbReference type="KEGG" id="mmu:320484"/>
<dbReference type="UCSC" id="uc008bwu.1">
    <molecule id="Q8C2K5-2"/>
    <property type="organism name" value="mouse"/>
</dbReference>
<dbReference type="UCSC" id="uc008bwv.1">
    <molecule id="Q8C2K5-1"/>
    <property type="organism name" value="mouse"/>
</dbReference>
<dbReference type="AGR" id="MGI:2444128"/>
<dbReference type="CTD" id="64926"/>
<dbReference type="MGI" id="MGI:2444128">
    <property type="gene designation" value="Rasal3"/>
</dbReference>
<dbReference type="VEuPathDB" id="HostDB:ENSMUSG00000052142"/>
<dbReference type="eggNOG" id="KOG3508">
    <property type="taxonomic scope" value="Eukaryota"/>
</dbReference>
<dbReference type="GeneTree" id="ENSGT00940000161423"/>
<dbReference type="InParanoid" id="Q8C2K5"/>
<dbReference type="OMA" id="TWGSRSQ"/>
<dbReference type="TreeFam" id="TF105303"/>
<dbReference type="Reactome" id="R-MMU-5658442">
    <property type="pathway name" value="Regulation of RAS by GAPs"/>
</dbReference>
<dbReference type="BioGRID-ORCS" id="320484">
    <property type="hits" value="0 hits in 76 CRISPR screens"/>
</dbReference>
<dbReference type="PRO" id="PR:Q8C2K5"/>
<dbReference type="Proteomes" id="UP000000589">
    <property type="component" value="Chromosome 17"/>
</dbReference>
<dbReference type="RNAct" id="Q8C2K5">
    <property type="molecule type" value="protein"/>
</dbReference>
<dbReference type="Bgee" id="ENSMUSG00000052142">
    <property type="expression patterns" value="Expressed in thymus and 73 other cell types or tissues"/>
</dbReference>
<dbReference type="ExpressionAtlas" id="Q8C2K5">
    <property type="expression patterns" value="baseline and differential"/>
</dbReference>
<dbReference type="GO" id="GO:0005938">
    <property type="term" value="C:cell cortex"/>
    <property type="evidence" value="ECO:0007669"/>
    <property type="project" value="UniProtKB-SubCell"/>
</dbReference>
<dbReference type="GO" id="GO:0005737">
    <property type="term" value="C:cytoplasm"/>
    <property type="evidence" value="ECO:0000250"/>
    <property type="project" value="UniProtKB"/>
</dbReference>
<dbReference type="GO" id="GO:0098562">
    <property type="term" value="C:cytoplasmic side of membrane"/>
    <property type="evidence" value="ECO:0007669"/>
    <property type="project" value="Ensembl"/>
</dbReference>
<dbReference type="GO" id="GO:0005096">
    <property type="term" value="F:GTPase activator activity"/>
    <property type="evidence" value="ECO:0007669"/>
    <property type="project" value="UniProtKB-KW"/>
</dbReference>
<dbReference type="GO" id="GO:0042802">
    <property type="term" value="F:identical protein binding"/>
    <property type="evidence" value="ECO:0007669"/>
    <property type="project" value="Ensembl"/>
</dbReference>
<dbReference type="GO" id="GO:0046580">
    <property type="term" value="P:negative regulation of Ras protein signal transduction"/>
    <property type="evidence" value="ECO:0000250"/>
    <property type="project" value="UniProtKB"/>
</dbReference>
<dbReference type="GO" id="GO:0051142">
    <property type="term" value="P:positive regulation of NK T cell proliferation"/>
    <property type="evidence" value="ECO:0000250"/>
    <property type="project" value="UniProtKB"/>
</dbReference>
<dbReference type="CDD" id="cd05136">
    <property type="entry name" value="RasGAP_DAB2IP"/>
    <property type="match status" value="1"/>
</dbReference>
<dbReference type="Gene3D" id="1.10.506.10">
    <property type="entry name" value="GTPase Activation - p120gap, domain 1"/>
    <property type="match status" value="2"/>
</dbReference>
<dbReference type="InterPro" id="IPR000008">
    <property type="entry name" value="C2_dom"/>
</dbReference>
<dbReference type="InterPro" id="IPR035892">
    <property type="entry name" value="C2_domain_sf"/>
</dbReference>
<dbReference type="InterPro" id="IPR039360">
    <property type="entry name" value="Ras_GTPase"/>
</dbReference>
<dbReference type="InterPro" id="IPR023152">
    <property type="entry name" value="RasGAP_CS"/>
</dbReference>
<dbReference type="InterPro" id="IPR001936">
    <property type="entry name" value="RasGAP_dom"/>
</dbReference>
<dbReference type="InterPro" id="IPR008936">
    <property type="entry name" value="Rho_GTPase_activation_prot"/>
</dbReference>
<dbReference type="PANTHER" id="PTHR10194">
    <property type="entry name" value="RAS GTPASE-ACTIVATING PROTEINS"/>
    <property type="match status" value="1"/>
</dbReference>
<dbReference type="PANTHER" id="PTHR10194:SF96">
    <property type="entry name" value="RAS PROTEIN ACTIVATOR LIKE-3"/>
    <property type="match status" value="1"/>
</dbReference>
<dbReference type="Pfam" id="PF25321">
    <property type="entry name" value="PH_RASGAP"/>
    <property type="match status" value="1"/>
</dbReference>
<dbReference type="Pfam" id="PF00616">
    <property type="entry name" value="RasGAP"/>
    <property type="match status" value="2"/>
</dbReference>
<dbReference type="SMART" id="SM00323">
    <property type="entry name" value="RasGAP"/>
    <property type="match status" value="1"/>
</dbReference>
<dbReference type="SUPFAM" id="SSF49562">
    <property type="entry name" value="C2 domain (Calcium/lipid-binding domain, CaLB)"/>
    <property type="match status" value="1"/>
</dbReference>
<dbReference type="SUPFAM" id="SSF48350">
    <property type="entry name" value="GTPase activation domain, GAP"/>
    <property type="match status" value="1"/>
</dbReference>
<dbReference type="SUPFAM" id="SSF50729">
    <property type="entry name" value="PH domain-like"/>
    <property type="match status" value="1"/>
</dbReference>
<dbReference type="PROSITE" id="PS50004">
    <property type="entry name" value="C2"/>
    <property type="match status" value="1"/>
</dbReference>
<dbReference type="PROSITE" id="PS00509">
    <property type="entry name" value="RAS_GTPASE_ACTIV_1"/>
    <property type="match status" value="1"/>
</dbReference>
<dbReference type="PROSITE" id="PS50018">
    <property type="entry name" value="RAS_GTPASE_ACTIV_2"/>
    <property type="match status" value="1"/>
</dbReference>
<protein>
    <recommendedName>
        <fullName>RAS protein activator like-3</fullName>
    </recommendedName>
</protein>
<organism>
    <name type="scientific">Mus musculus</name>
    <name type="common">Mouse</name>
    <dbReference type="NCBI Taxonomy" id="10090"/>
    <lineage>
        <taxon>Eukaryota</taxon>
        <taxon>Metazoa</taxon>
        <taxon>Chordata</taxon>
        <taxon>Craniata</taxon>
        <taxon>Vertebrata</taxon>
        <taxon>Euteleostomi</taxon>
        <taxon>Mammalia</taxon>
        <taxon>Eutheria</taxon>
        <taxon>Euarchontoglires</taxon>
        <taxon>Glires</taxon>
        <taxon>Rodentia</taxon>
        <taxon>Myomorpha</taxon>
        <taxon>Muroidea</taxon>
        <taxon>Muridae</taxon>
        <taxon>Murinae</taxon>
        <taxon>Mus</taxon>
        <taxon>Mus</taxon>
    </lineage>
</organism>
<feature type="chain" id="PRO_0000322567" description="RAS protein activator like-3">
    <location>
        <begin position="1"/>
        <end position="1041"/>
    </location>
</feature>
<feature type="domain" description="PH">
    <location>
        <begin position="220"/>
        <end position="321"/>
    </location>
</feature>
<feature type="domain" description="C2" evidence="3">
    <location>
        <begin position="312"/>
        <end position="430"/>
    </location>
</feature>
<feature type="domain" description="Ras-GAP" evidence="4">
    <location>
        <begin position="500"/>
        <end position="708"/>
    </location>
</feature>
<feature type="region of interest" description="Disordered" evidence="5">
    <location>
        <begin position="1"/>
        <end position="59"/>
    </location>
</feature>
<feature type="region of interest" description="Disordered" evidence="5">
    <location>
        <begin position="234"/>
        <end position="256"/>
    </location>
</feature>
<feature type="region of interest" description="Disordered" evidence="5">
    <location>
        <begin position="790"/>
        <end position="910"/>
    </location>
</feature>
<feature type="region of interest" description="Disordered" evidence="5">
    <location>
        <begin position="1016"/>
        <end position="1041"/>
    </location>
</feature>
<feature type="coiled-coil region" evidence="2">
    <location>
        <begin position="218"/>
        <end position="243"/>
    </location>
</feature>
<feature type="coiled-coil region" evidence="2">
    <location>
        <begin position="931"/>
        <end position="1013"/>
    </location>
</feature>
<feature type="compositionally biased region" description="Polar residues" evidence="5">
    <location>
        <begin position="34"/>
        <end position="44"/>
    </location>
</feature>
<feature type="compositionally biased region" description="Basic residues" evidence="5">
    <location>
        <begin position="850"/>
        <end position="866"/>
    </location>
</feature>
<feature type="site" description="Arginine finger; crucial for GTP hydrolysis by stabilizing the transition state" evidence="4">
    <location>
        <position position="526"/>
    </location>
</feature>
<feature type="modified residue" description="Phosphoserine" evidence="1">
    <location>
        <position position="41"/>
    </location>
</feature>
<feature type="modified residue" description="Phosphoserine" evidence="9">
    <location>
        <position position="74"/>
    </location>
</feature>
<feature type="modified residue" description="Phosphoserine" evidence="9">
    <location>
        <position position="187"/>
    </location>
</feature>
<feature type="modified residue" description="Phosphoserine" evidence="9">
    <location>
        <position position="189"/>
    </location>
</feature>
<feature type="modified residue" description="Phosphoserine" evidence="9">
    <location>
        <position position="190"/>
    </location>
</feature>
<feature type="modified residue" description="Phosphoserine" evidence="9">
    <location>
        <position position="193"/>
    </location>
</feature>
<feature type="modified residue" description="Phosphoserine" evidence="9">
    <location>
        <position position="239"/>
    </location>
</feature>
<feature type="modified residue" description="Phosphoserine" evidence="9">
    <location>
        <position position="252"/>
    </location>
</feature>
<feature type="modified residue" description="Phosphoserine" evidence="9">
    <location>
        <position position="256"/>
    </location>
</feature>
<feature type="modified residue" description="Phosphoserine" evidence="9">
    <location>
        <position position="259"/>
    </location>
</feature>
<feature type="modified residue" description="Phosphothreonine" evidence="9">
    <location>
        <position position="262"/>
    </location>
</feature>
<feature type="modified residue" description="Phosphoserine" evidence="9">
    <location>
        <position position="813"/>
    </location>
</feature>
<feature type="modified residue" description="Phosphoserine" evidence="9">
    <location>
        <position position="816"/>
    </location>
</feature>
<feature type="splice variant" id="VSP_031931" description="In isoform 2." evidence="7">
    <location>
        <begin position="1"/>
        <end position="22"/>
    </location>
</feature>
<feature type="splice variant" id="VSP_031932" description="In isoform 2." evidence="7">
    <original>E</original>
    <variation>ERSKQAMVPGVKGQLSGVSSLLQLQ</variation>
    <location>
        <position position="132"/>
    </location>
</feature>
<feature type="sequence conflict" description="In Ref. 1; BAC27141." evidence="8" ref="1">
    <original>L</original>
    <variation>M</variation>
    <location>
        <position position="122"/>
    </location>
</feature>
<feature type="sequence conflict" description="In Ref. 1; BAC27141." evidence="8" ref="1">
    <original>R</original>
    <variation>H</variation>
    <location>
        <position position="494"/>
    </location>
</feature>
<feature type="sequence conflict" description="In Ref. 1; BAC40689." evidence="8" ref="1">
    <original>G</original>
    <variation>S</variation>
    <location>
        <position position="978"/>
    </location>
</feature>
<reference key="1">
    <citation type="journal article" date="2005" name="Science">
        <title>The transcriptional landscape of the mammalian genome.</title>
        <authorList>
            <person name="Carninci P."/>
            <person name="Kasukawa T."/>
            <person name="Katayama S."/>
            <person name="Gough J."/>
            <person name="Frith M.C."/>
            <person name="Maeda N."/>
            <person name="Oyama R."/>
            <person name="Ravasi T."/>
            <person name="Lenhard B."/>
            <person name="Wells C."/>
            <person name="Kodzius R."/>
            <person name="Shimokawa K."/>
            <person name="Bajic V.B."/>
            <person name="Brenner S.E."/>
            <person name="Batalov S."/>
            <person name="Forrest A.R."/>
            <person name="Zavolan M."/>
            <person name="Davis M.J."/>
            <person name="Wilming L.G."/>
            <person name="Aidinis V."/>
            <person name="Allen J.E."/>
            <person name="Ambesi-Impiombato A."/>
            <person name="Apweiler R."/>
            <person name="Aturaliya R.N."/>
            <person name="Bailey T.L."/>
            <person name="Bansal M."/>
            <person name="Baxter L."/>
            <person name="Beisel K.W."/>
            <person name="Bersano T."/>
            <person name="Bono H."/>
            <person name="Chalk A.M."/>
            <person name="Chiu K.P."/>
            <person name="Choudhary V."/>
            <person name="Christoffels A."/>
            <person name="Clutterbuck D.R."/>
            <person name="Crowe M.L."/>
            <person name="Dalla E."/>
            <person name="Dalrymple B.P."/>
            <person name="de Bono B."/>
            <person name="Della Gatta G."/>
            <person name="di Bernardo D."/>
            <person name="Down T."/>
            <person name="Engstrom P."/>
            <person name="Fagiolini M."/>
            <person name="Faulkner G."/>
            <person name="Fletcher C.F."/>
            <person name="Fukushima T."/>
            <person name="Furuno M."/>
            <person name="Futaki S."/>
            <person name="Gariboldi M."/>
            <person name="Georgii-Hemming P."/>
            <person name="Gingeras T.R."/>
            <person name="Gojobori T."/>
            <person name="Green R.E."/>
            <person name="Gustincich S."/>
            <person name="Harbers M."/>
            <person name="Hayashi Y."/>
            <person name="Hensch T.K."/>
            <person name="Hirokawa N."/>
            <person name="Hill D."/>
            <person name="Huminiecki L."/>
            <person name="Iacono M."/>
            <person name="Ikeo K."/>
            <person name="Iwama A."/>
            <person name="Ishikawa T."/>
            <person name="Jakt M."/>
            <person name="Kanapin A."/>
            <person name="Katoh M."/>
            <person name="Kawasawa Y."/>
            <person name="Kelso J."/>
            <person name="Kitamura H."/>
            <person name="Kitano H."/>
            <person name="Kollias G."/>
            <person name="Krishnan S.P."/>
            <person name="Kruger A."/>
            <person name="Kummerfeld S.K."/>
            <person name="Kurochkin I.V."/>
            <person name="Lareau L.F."/>
            <person name="Lazarevic D."/>
            <person name="Lipovich L."/>
            <person name="Liu J."/>
            <person name="Liuni S."/>
            <person name="McWilliam S."/>
            <person name="Madan Babu M."/>
            <person name="Madera M."/>
            <person name="Marchionni L."/>
            <person name="Matsuda H."/>
            <person name="Matsuzawa S."/>
            <person name="Miki H."/>
            <person name="Mignone F."/>
            <person name="Miyake S."/>
            <person name="Morris K."/>
            <person name="Mottagui-Tabar S."/>
            <person name="Mulder N."/>
            <person name="Nakano N."/>
            <person name="Nakauchi H."/>
            <person name="Ng P."/>
            <person name="Nilsson R."/>
            <person name="Nishiguchi S."/>
            <person name="Nishikawa S."/>
            <person name="Nori F."/>
            <person name="Ohara O."/>
            <person name="Okazaki Y."/>
            <person name="Orlando V."/>
            <person name="Pang K.C."/>
            <person name="Pavan W.J."/>
            <person name="Pavesi G."/>
            <person name="Pesole G."/>
            <person name="Petrovsky N."/>
            <person name="Piazza S."/>
            <person name="Reed J."/>
            <person name="Reid J.F."/>
            <person name="Ring B.Z."/>
            <person name="Ringwald M."/>
            <person name="Rost B."/>
            <person name="Ruan Y."/>
            <person name="Salzberg S.L."/>
            <person name="Sandelin A."/>
            <person name="Schneider C."/>
            <person name="Schoenbach C."/>
            <person name="Sekiguchi K."/>
            <person name="Semple C.A."/>
            <person name="Seno S."/>
            <person name="Sessa L."/>
            <person name="Sheng Y."/>
            <person name="Shibata Y."/>
            <person name="Shimada H."/>
            <person name="Shimada K."/>
            <person name="Silva D."/>
            <person name="Sinclair B."/>
            <person name="Sperling S."/>
            <person name="Stupka E."/>
            <person name="Sugiura K."/>
            <person name="Sultana R."/>
            <person name="Takenaka Y."/>
            <person name="Taki K."/>
            <person name="Tammoja K."/>
            <person name="Tan S.L."/>
            <person name="Tang S."/>
            <person name="Taylor M.S."/>
            <person name="Tegner J."/>
            <person name="Teichmann S.A."/>
            <person name="Ueda H.R."/>
            <person name="van Nimwegen E."/>
            <person name="Verardo R."/>
            <person name="Wei C.L."/>
            <person name="Yagi K."/>
            <person name="Yamanishi H."/>
            <person name="Zabarovsky E."/>
            <person name="Zhu S."/>
            <person name="Zimmer A."/>
            <person name="Hide W."/>
            <person name="Bult C."/>
            <person name="Grimmond S.M."/>
            <person name="Teasdale R.D."/>
            <person name="Liu E.T."/>
            <person name="Brusic V."/>
            <person name="Quackenbush J."/>
            <person name="Wahlestedt C."/>
            <person name="Mattick J.S."/>
            <person name="Hume D.A."/>
            <person name="Kai C."/>
            <person name="Sasaki D."/>
            <person name="Tomaru Y."/>
            <person name="Fukuda S."/>
            <person name="Kanamori-Katayama M."/>
            <person name="Suzuki M."/>
            <person name="Aoki J."/>
            <person name="Arakawa T."/>
            <person name="Iida J."/>
            <person name="Imamura K."/>
            <person name="Itoh M."/>
            <person name="Kato T."/>
            <person name="Kawaji H."/>
            <person name="Kawagashira N."/>
            <person name="Kawashima T."/>
            <person name="Kojima M."/>
            <person name="Kondo S."/>
            <person name="Konno H."/>
            <person name="Nakano K."/>
            <person name="Ninomiya N."/>
            <person name="Nishio T."/>
            <person name="Okada M."/>
            <person name="Plessy C."/>
            <person name="Shibata K."/>
            <person name="Shiraki T."/>
            <person name="Suzuki S."/>
            <person name="Tagami M."/>
            <person name="Waki K."/>
            <person name="Watahiki A."/>
            <person name="Okamura-Oho Y."/>
            <person name="Suzuki H."/>
            <person name="Kawai J."/>
            <person name="Hayashizaki Y."/>
        </authorList>
    </citation>
    <scope>NUCLEOTIDE SEQUENCE [LARGE SCALE MRNA] (ISOFORM 1)</scope>
    <source>
        <strain>C57BL/6J</strain>
        <strain>NOD</strain>
        <tissue>Thymus</tissue>
    </source>
</reference>
<reference key="2">
    <citation type="journal article" date="2004" name="Genome Res.">
        <title>The status, quality, and expansion of the NIH full-length cDNA project: the Mammalian Gene Collection (MGC).</title>
        <authorList>
            <consortium name="The MGC Project Team"/>
        </authorList>
    </citation>
    <scope>NUCLEOTIDE SEQUENCE [LARGE SCALE MRNA] (ISOFORM 2)</scope>
    <source>
        <tissue>Brain</tissue>
    </source>
</reference>
<reference key="3">
    <citation type="journal article" date="2010" name="Cell">
        <title>A tissue-specific atlas of mouse protein phosphorylation and expression.</title>
        <authorList>
            <person name="Huttlin E.L."/>
            <person name="Jedrychowski M.P."/>
            <person name="Elias J.E."/>
            <person name="Goswami T."/>
            <person name="Rad R."/>
            <person name="Beausoleil S.A."/>
            <person name="Villen J."/>
            <person name="Haas W."/>
            <person name="Sowa M.E."/>
            <person name="Gygi S.P."/>
        </authorList>
    </citation>
    <scope>PHOSPHORYLATION [LARGE SCALE ANALYSIS] AT SER-74; SER-187; SER-189; SER-190; SER-193; SER-239; SER-252; SER-256; SER-259; THR-262; SER-813 AND SER-816</scope>
    <scope>IDENTIFICATION BY MASS SPECTROMETRY [LARGE SCALE ANALYSIS]</scope>
    <source>
        <tissue>Lung</tissue>
        <tissue>Spleen</tissue>
    </source>
</reference>
<reference key="4">
    <citation type="journal article" date="2015" name="Eur. J. Immunol.">
        <title>RASAL3, a novel hematopoietic RasGAP protein, regulates the number and functions of NKT cells.</title>
        <authorList>
            <person name="Saito S."/>
            <person name="Kawamura T."/>
            <person name="Higuchi M."/>
            <person name="Kobayashi T."/>
            <person name="Yoshita-Takahashi M."/>
            <person name="Yamazaki M."/>
            <person name="Abe M."/>
            <person name="Sakimura K."/>
            <person name="Kanda Y."/>
            <person name="Kawamura H."/>
            <person name="Jiang S."/>
            <person name="Naito M."/>
            <person name="Yoshizaki T."/>
            <person name="Takahashi M."/>
            <person name="Fujii M."/>
        </authorList>
    </citation>
    <scope>TISSUE SPECIFICITY</scope>
    <scope>FUNCTION</scope>
    <scope>DISRUPTION PHENOTYPE</scope>
</reference>
<comment type="function">
    <text evidence="6">Functions as a Ras GTPase-activating protein. Plays an important role in the expansion and functions of natural killer T (NKT) cells in the liver by negatively regulating RAS activity and the down-stream ERK signaling pathway.</text>
</comment>
<comment type="interaction">
    <interactant intactId="EBI-12601423">
        <id>Q8C2K5</id>
    </interactant>
    <interactant intactId="EBI-54453184">
        <id>Q4QRL3</id>
        <label>Ccdc88b</label>
    </interactant>
    <organismsDiffer>false</organismsDiffer>
    <experiments>6</experiments>
</comment>
<comment type="subcellular location">
    <subcellularLocation>
        <location evidence="1">Cytoplasm</location>
    </subcellularLocation>
    <subcellularLocation>
        <location evidence="1">Cytoplasm</location>
        <location evidence="1">Cell cortex</location>
    </subcellularLocation>
</comment>
<comment type="alternative products">
    <event type="alternative splicing"/>
    <isoform>
        <id>Q8C2K5-1</id>
        <name>1</name>
        <sequence type="displayed"/>
    </isoform>
    <isoform>
        <id>Q8C2K5-2</id>
        <name>2</name>
        <sequence type="described" ref="VSP_031931 VSP_031932"/>
    </isoform>
</comment>
<comment type="tissue specificity">
    <text>Predominantly expressed in hematopoietic tissues.</text>
</comment>
<comment type="disruption phenotype">
    <text evidence="6">No visible phenotype. The number of natural killer T (NKT) cells in the liver is selectively decreased (around 50%) in mutant mice (PubMed:25652366).</text>
</comment>
<comment type="caution">
    <text evidence="8">It is uncertain whether Met-1 or Met-23 is the initiator.</text>
</comment>
<comment type="sequence caution" evidence="8">
    <conflict type="frameshift">
        <sequence resource="EMBL-CDS" id="BAC30956"/>
    </conflict>
</comment>
<sequence length="1041" mass="114782">MKPECGQTMFRTFWSRSRDSSAMDPPLQSEEDSQTQPSLPSPLTSYRWHTGGSGEKAAGGFRWGRFAGWGRALSHQEPMVNSQPAPRSLFRRVLSAPPKESRSNRLRFSKTLWGRHKNVAPLEPKPNPKAPEPELELVADPDLPVAQIPEPPTPDMPVWNIDGFTLLEGKLVMLGEEEGPRQIRVGSASSENSMQAALGNLKDAVRTPGKTEPEAAGSNQVHNVRKLLKRLKEKKRAKSELGAYTPRDGPPSALGSRESLATLSELDLGAERDVRVWPLHPSLLGEPYCFQVTWAGGSLCFSCRSSAERDRWIEDLRRQFQPSQDNVERQEMWLTVWVHEAKGLPRATVPGVRAELWLDGALLARTAPRAGPGQLFWAERFHFEALPPARRLSLRLRSAGPAGATVGRVVLELDEVSIPRAPAAGLERWFPVLGAPAGAVLRARIRVRCLRVLPSERYKELAEFLTFHYARLCGALEPALSAQAKEELAAAMVRVLRATGRAQALVTDLGTAELARCGGREALLFRENTLATKAIDEYMKLVAQEYLQDTLGQVVRCLCASTEDCEVDPSKCPTPELPKHQARLRDSCEEVFENIIHSYNCFPAELGSVFSSWREACKARGSEALGPRLVCASLFLRLLCPAILAPSLFGLAPEHPAPGPARTLTLIAKVIQNLANCAPFGEKEAYMAFMNSFLEDHGPAMQHFLDQVATVDADTTPSGYQGSGDLALQLAVLHVQLCTIFAELDQKTQDSLEPLPTILRAIEEGRPVPVSVPMRLPRISTQVQSSFFSGEKPGFLAPRDLPKHTPLISKSQSLRSFQGAGSWASRRPDEERPQRRPRPVLRTQSVPARRPTHRRPSAGSKPRPKGSLRMGPAPCGRAWTRASASLPRKPSVPWQRQMDQPGDRYQTTGTHRPVGKLAEIQCEVAIFREAQKALSLLVESLSTQVQALKEQQEHFRCQLQDLYSRLGAGISKLDSKGGLPSNGSHRLKSLEQRLTEMECSQDQLRDSLQSLQLLSKTPGSRSQPLPLKAPCVNGADLSMGT</sequence>